<name>RS10_BACC0</name>
<protein>
    <recommendedName>
        <fullName evidence="1">Small ribosomal subunit protein uS10</fullName>
    </recommendedName>
    <alternativeName>
        <fullName evidence="2">30S ribosomal protein S10</fullName>
    </alternativeName>
</protein>
<keyword id="KW-0687">Ribonucleoprotein</keyword>
<keyword id="KW-0689">Ribosomal protein</keyword>
<proteinExistence type="inferred from homology"/>
<gene>
    <name evidence="1" type="primary">rpsJ</name>
    <name type="ordered locus">BCAH820_0121</name>
</gene>
<accession>B7JKB8</accession>
<dbReference type="EMBL" id="CP001283">
    <property type="protein sequence ID" value="ACK92562.1"/>
    <property type="molecule type" value="Genomic_DNA"/>
</dbReference>
<dbReference type="RefSeq" id="WP_001040596.1">
    <property type="nucleotide sequence ID" value="NC_011773.1"/>
</dbReference>
<dbReference type="SMR" id="B7JKB8"/>
<dbReference type="GeneID" id="93010944"/>
<dbReference type="KEGG" id="bcu:BCAH820_0121"/>
<dbReference type="HOGENOM" id="CLU_122625_1_3_9"/>
<dbReference type="Proteomes" id="UP000001363">
    <property type="component" value="Chromosome"/>
</dbReference>
<dbReference type="GO" id="GO:1990904">
    <property type="term" value="C:ribonucleoprotein complex"/>
    <property type="evidence" value="ECO:0007669"/>
    <property type="project" value="UniProtKB-KW"/>
</dbReference>
<dbReference type="GO" id="GO:0005840">
    <property type="term" value="C:ribosome"/>
    <property type="evidence" value="ECO:0007669"/>
    <property type="project" value="UniProtKB-KW"/>
</dbReference>
<dbReference type="GO" id="GO:0003735">
    <property type="term" value="F:structural constituent of ribosome"/>
    <property type="evidence" value="ECO:0007669"/>
    <property type="project" value="InterPro"/>
</dbReference>
<dbReference type="GO" id="GO:0000049">
    <property type="term" value="F:tRNA binding"/>
    <property type="evidence" value="ECO:0007669"/>
    <property type="project" value="UniProtKB-UniRule"/>
</dbReference>
<dbReference type="GO" id="GO:0006412">
    <property type="term" value="P:translation"/>
    <property type="evidence" value="ECO:0007669"/>
    <property type="project" value="UniProtKB-UniRule"/>
</dbReference>
<dbReference type="FunFam" id="3.30.70.600:FF:000001">
    <property type="entry name" value="30S ribosomal protein S10"/>
    <property type="match status" value="1"/>
</dbReference>
<dbReference type="Gene3D" id="3.30.70.600">
    <property type="entry name" value="Ribosomal protein S10 domain"/>
    <property type="match status" value="1"/>
</dbReference>
<dbReference type="HAMAP" id="MF_00508">
    <property type="entry name" value="Ribosomal_uS10"/>
    <property type="match status" value="1"/>
</dbReference>
<dbReference type="InterPro" id="IPR001848">
    <property type="entry name" value="Ribosomal_uS10"/>
</dbReference>
<dbReference type="InterPro" id="IPR018268">
    <property type="entry name" value="Ribosomal_uS10_CS"/>
</dbReference>
<dbReference type="InterPro" id="IPR027486">
    <property type="entry name" value="Ribosomal_uS10_dom"/>
</dbReference>
<dbReference type="InterPro" id="IPR036838">
    <property type="entry name" value="Ribosomal_uS10_dom_sf"/>
</dbReference>
<dbReference type="NCBIfam" id="NF001861">
    <property type="entry name" value="PRK00596.1"/>
    <property type="match status" value="1"/>
</dbReference>
<dbReference type="NCBIfam" id="TIGR01049">
    <property type="entry name" value="rpsJ_bact"/>
    <property type="match status" value="1"/>
</dbReference>
<dbReference type="PANTHER" id="PTHR11700">
    <property type="entry name" value="30S RIBOSOMAL PROTEIN S10 FAMILY MEMBER"/>
    <property type="match status" value="1"/>
</dbReference>
<dbReference type="Pfam" id="PF00338">
    <property type="entry name" value="Ribosomal_S10"/>
    <property type="match status" value="1"/>
</dbReference>
<dbReference type="PRINTS" id="PR00971">
    <property type="entry name" value="RIBOSOMALS10"/>
</dbReference>
<dbReference type="SMART" id="SM01403">
    <property type="entry name" value="Ribosomal_S10"/>
    <property type="match status" value="1"/>
</dbReference>
<dbReference type="SUPFAM" id="SSF54999">
    <property type="entry name" value="Ribosomal protein S10"/>
    <property type="match status" value="1"/>
</dbReference>
<dbReference type="PROSITE" id="PS00361">
    <property type="entry name" value="RIBOSOMAL_S10"/>
    <property type="match status" value="1"/>
</dbReference>
<feature type="chain" id="PRO_1000127076" description="Small ribosomal subunit protein uS10">
    <location>
        <begin position="1"/>
        <end position="102"/>
    </location>
</feature>
<evidence type="ECO:0000255" key="1">
    <source>
        <dbReference type="HAMAP-Rule" id="MF_00508"/>
    </source>
</evidence>
<evidence type="ECO:0000305" key="2"/>
<comment type="function">
    <text evidence="1">Involved in the binding of tRNA to the ribosomes.</text>
</comment>
<comment type="subunit">
    <text evidence="1">Part of the 30S ribosomal subunit.</text>
</comment>
<comment type="similarity">
    <text evidence="1">Belongs to the universal ribosomal protein uS10 family.</text>
</comment>
<sequence length="102" mass="11684">MAKEKIRIRLKAYDHRILDQSAEKIVETAKRSGATVSGPIPLPTEKTVYTILRAVHKYKDSREQFEMRTHKRLIDIVSPTPQTVDSLMRLDLPSGVDIEIKL</sequence>
<reference key="1">
    <citation type="submission" date="2008-10" db="EMBL/GenBank/DDBJ databases">
        <title>Genome sequence of Bacillus cereus AH820.</title>
        <authorList>
            <person name="Dodson R.J."/>
            <person name="Durkin A.S."/>
            <person name="Rosovitz M.J."/>
            <person name="Rasko D.A."/>
            <person name="Hoffmaster A."/>
            <person name="Ravel J."/>
            <person name="Sutton G."/>
        </authorList>
    </citation>
    <scope>NUCLEOTIDE SEQUENCE [LARGE SCALE GENOMIC DNA]</scope>
    <source>
        <strain>AH820</strain>
    </source>
</reference>
<organism>
    <name type="scientific">Bacillus cereus (strain AH820)</name>
    <dbReference type="NCBI Taxonomy" id="405535"/>
    <lineage>
        <taxon>Bacteria</taxon>
        <taxon>Bacillati</taxon>
        <taxon>Bacillota</taxon>
        <taxon>Bacilli</taxon>
        <taxon>Bacillales</taxon>
        <taxon>Bacillaceae</taxon>
        <taxon>Bacillus</taxon>
        <taxon>Bacillus cereus group</taxon>
    </lineage>
</organism>